<gene>
    <name evidence="1" type="primary">tig</name>
    <name type="ordered locus">CLK_2630</name>
</gene>
<comment type="function">
    <text evidence="1">Involved in protein export. Acts as a chaperone by maintaining the newly synthesized protein in an open conformation. Functions as a peptidyl-prolyl cis-trans isomerase.</text>
</comment>
<comment type="catalytic activity">
    <reaction evidence="1">
        <text>[protein]-peptidylproline (omega=180) = [protein]-peptidylproline (omega=0)</text>
        <dbReference type="Rhea" id="RHEA:16237"/>
        <dbReference type="Rhea" id="RHEA-COMP:10747"/>
        <dbReference type="Rhea" id="RHEA-COMP:10748"/>
        <dbReference type="ChEBI" id="CHEBI:83833"/>
        <dbReference type="ChEBI" id="CHEBI:83834"/>
        <dbReference type="EC" id="5.2.1.8"/>
    </reaction>
</comment>
<comment type="subcellular location">
    <subcellularLocation>
        <location>Cytoplasm</location>
    </subcellularLocation>
    <text evidence="1">About half TF is bound to the ribosome near the polypeptide exit tunnel while the other half is free in the cytoplasm.</text>
</comment>
<comment type="domain">
    <text evidence="1">Consists of 3 domains; the N-terminus binds the ribosome, the middle domain has PPIase activity, while the C-terminus has intrinsic chaperone activity on its own.</text>
</comment>
<comment type="similarity">
    <text evidence="1">Belongs to the FKBP-type PPIase family. Tig subfamily.</text>
</comment>
<name>TIG_CLOBM</name>
<accession>B1L1D8</accession>
<protein>
    <recommendedName>
        <fullName evidence="1">Trigger factor</fullName>
        <shortName evidence="1">TF</shortName>
        <ecNumber evidence="1">5.2.1.8</ecNumber>
    </recommendedName>
    <alternativeName>
        <fullName evidence="1">PPIase</fullName>
    </alternativeName>
</protein>
<sequence>MNVKVENIEKNVVKLEITVDSEKFNEAVKKSFKKNAKRFNVPGFRKGKAPLNIIKKYYGEGVLFEDAINFCCEDTYPKAIEENNIKPVDYPQIDVVQIGEGKDFIYTAEVTTVPEVKLGEYKGVEVKKVSYEVEDEAVENELKSMQEKNARVFLKEEGEIEKGNIAIIDFKGYVDGKAFEGGEAKDYEIEIGSGTFIGDFEDQLVGLKKDESKEVNVSFPEEYGREDLNGKPATFEVTIKDIKVKELPALDDEFAKEVSEFDTLEELKSDIKDRMKKELSEKAKAEYEEAVVEAVGANAEIEIPKVMIEKEIENMVRDLEMRLKYQGLDLKSYYEFTNSSEEKVKEYMRETAEKRVKTDLIMQEIAKVEDIKATEEELKEKAMEVAKQYGQKDVEKTAELIANAQKSYLEIDIVNGKVLDLLVENSKEIA</sequence>
<keyword id="KW-0131">Cell cycle</keyword>
<keyword id="KW-0132">Cell division</keyword>
<keyword id="KW-0143">Chaperone</keyword>
<keyword id="KW-0963">Cytoplasm</keyword>
<keyword id="KW-0413">Isomerase</keyword>
<keyword id="KW-0697">Rotamase</keyword>
<feature type="chain" id="PRO_1000115523" description="Trigger factor">
    <location>
        <begin position="1"/>
        <end position="430"/>
    </location>
</feature>
<feature type="domain" description="PPIase FKBP-type" evidence="1">
    <location>
        <begin position="163"/>
        <end position="248"/>
    </location>
</feature>
<organism>
    <name type="scientific">Clostridium botulinum (strain Loch Maree / Type A3)</name>
    <dbReference type="NCBI Taxonomy" id="498214"/>
    <lineage>
        <taxon>Bacteria</taxon>
        <taxon>Bacillati</taxon>
        <taxon>Bacillota</taxon>
        <taxon>Clostridia</taxon>
        <taxon>Eubacteriales</taxon>
        <taxon>Clostridiaceae</taxon>
        <taxon>Clostridium</taxon>
    </lineage>
</organism>
<reference key="1">
    <citation type="journal article" date="2007" name="PLoS ONE">
        <title>Analysis of the neurotoxin complex genes in Clostridium botulinum A1-A4 and B1 strains: BoNT/A3, /Ba4 and /B1 clusters are located within plasmids.</title>
        <authorList>
            <person name="Smith T.J."/>
            <person name="Hill K.K."/>
            <person name="Foley B.T."/>
            <person name="Detter J.C."/>
            <person name="Munk A.C."/>
            <person name="Bruce D.C."/>
            <person name="Doggett N.A."/>
            <person name="Smith L.A."/>
            <person name="Marks J.D."/>
            <person name="Xie G."/>
            <person name="Brettin T.S."/>
        </authorList>
    </citation>
    <scope>NUCLEOTIDE SEQUENCE [LARGE SCALE GENOMIC DNA]</scope>
    <source>
        <strain>Loch Maree / Type A3</strain>
    </source>
</reference>
<dbReference type="EC" id="5.2.1.8" evidence="1"/>
<dbReference type="EMBL" id="CP000962">
    <property type="protein sequence ID" value="ACA56490.1"/>
    <property type="molecule type" value="Genomic_DNA"/>
</dbReference>
<dbReference type="RefSeq" id="WP_012344355.1">
    <property type="nucleotide sequence ID" value="NC_010520.1"/>
</dbReference>
<dbReference type="SMR" id="B1L1D8"/>
<dbReference type="KEGG" id="cbl:CLK_2630"/>
<dbReference type="HOGENOM" id="CLU_033058_3_2_9"/>
<dbReference type="GO" id="GO:0005737">
    <property type="term" value="C:cytoplasm"/>
    <property type="evidence" value="ECO:0007669"/>
    <property type="project" value="UniProtKB-SubCell"/>
</dbReference>
<dbReference type="GO" id="GO:0003755">
    <property type="term" value="F:peptidyl-prolyl cis-trans isomerase activity"/>
    <property type="evidence" value="ECO:0007669"/>
    <property type="project" value="UniProtKB-UniRule"/>
</dbReference>
<dbReference type="GO" id="GO:0044183">
    <property type="term" value="F:protein folding chaperone"/>
    <property type="evidence" value="ECO:0007669"/>
    <property type="project" value="TreeGrafter"/>
</dbReference>
<dbReference type="GO" id="GO:0043022">
    <property type="term" value="F:ribosome binding"/>
    <property type="evidence" value="ECO:0007669"/>
    <property type="project" value="TreeGrafter"/>
</dbReference>
<dbReference type="GO" id="GO:0051083">
    <property type="term" value="P:'de novo' cotranslational protein folding"/>
    <property type="evidence" value="ECO:0007669"/>
    <property type="project" value="TreeGrafter"/>
</dbReference>
<dbReference type="GO" id="GO:0051301">
    <property type="term" value="P:cell division"/>
    <property type="evidence" value="ECO:0007669"/>
    <property type="project" value="UniProtKB-KW"/>
</dbReference>
<dbReference type="GO" id="GO:0061077">
    <property type="term" value="P:chaperone-mediated protein folding"/>
    <property type="evidence" value="ECO:0007669"/>
    <property type="project" value="TreeGrafter"/>
</dbReference>
<dbReference type="GO" id="GO:0015031">
    <property type="term" value="P:protein transport"/>
    <property type="evidence" value="ECO:0007669"/>
    <property type="project" value="UniProtKB-UniRule"/>
</dbReference>
<dbReference type="GO" id="GO:0043335">
    <property type="term" value="P:protein unfolding"/>
    <property type="evidence" value="ECO:0007669"/>
    <property type="project" value="TreeGrafter"/>
</dbReference>
<dbReference type="FunFam" id="1.10.3120.10:FF:000010">
    <property type="entry name" value="Trigger factor"/>
    <property type="match status" value="1"/>
</dbReference>
<dbReference type="FunFam" id="3.10.50.40:FF:000001">
    <property type="entry name" value="Trigger factor"/>
    <property type="match status" value="1"/>
</dbReference>
<dbReference type="Gene3D" id="3.10.50.40">
    <property type="match status" value="1"/>
</dbReference>
<dbReference type="Gene3D" id="3.30.70.1050">
    <property type="entry name" value="Trigger factor ribosome-binding domain"/>
    <property type="match status" value="1"/>
</dbReference>
<dbReference type="Gene3D" id="1.10.3120.10">
    <property type="entry name" value="Trigger factor, C-terminal domain"/>
    <property type="match status" value="1"/>
</dbReference>
<dbReference type="HAMAP" id="MF_00303">
    <property type="entry name" value="Trigger_factor_Tig"/>
    <property type="match status" value="1"/>
</dbReference>
<dbReference type="InterPro" id="IPR046357">
    <property type="entry name" value="PPIase_dom_sf"/>
</dbReference>
<dbReference type="InterPro" id="IPR001179">
    <property type="entry name" value="PPIase_FKBP_dom"/>
</dbReference>
<dbReference type="InterPro" id="IPR005215">
    <property type="entry name" value="Trig_fac"/>
</dbReference>
<dbReference type="InterPro" id="IPR008880">
    <property type="entry name" value="Trigger_fac_C"/>
</dbReference>
<dbReference type="InterPro" id="IPR037041">
    <property type="entry name" value="Trigger_fac_C_sf"/>
</dbReference>
<dbReference type="InterPro" id="IPR008881">
    <property type="entry name" value="Trigger_fac_ribosome-bd_bac"/>
</dbReference>
<dbReference type="InterPro" id="IPR036611">
    <property type="entry name" value="Trigger_fac_ribosome-bd_sf"/>
</dbReference>
<dbReference type="InterPro" id="IPR027304">
    <property type="entry name" value="Trigger_fact/SurA_dom_sf"/>
</dbReference>
<dbReference type="NCBIfam" id="TIGR00115">
    <property type="entry name" value="tig"/>
    <property type="match status" value="1"/>
</dbReference>
<dbReference type="PANTHER" id="PTHR30560">
    <property type="entry name" value="TRIGGER FACTOR CHAPERONE AND PEPTIDYL-PROLYL CIS/TRANS ISOMERASE"/>
    <property type="match status" value="1"/>
</dbReference>
<dbReference type="PANTHER" id="PTHR30560:SF3">
    <property type="entry name" value="TRIGGER FACTOR-LIKE PROTEIN TIG, CHLOROPLASTIC"/>
    <property type="match status" value="1"/>
</dbReference>
<dbReference type="Pfam" id="PF00254">
    <property type="entry name" value="FKBP_C"/>
    <property type="match status" value="1"/>
</dbReference>
<dbReference type="Pfam" id="PF05698">
    <property type="entry name" value="Trigger_C"/>
    <property type="match status" value="1"/>
</dbReference>
<dbReference type="Pfam" id="PF05697">
    <property type="entry name" value="Trigger_N"/>
    <property type="match status" value="1"/>
</dbReference>
<dbReference type="PIRSF" id="PIRSF003095">
    <property type="entry name" value="Trigger_factor"/>
    <property type="match status" value="1"/>
</dbReference>
<dbReference type="SUPFAM" id="SSF54534">
    <property type="entry name" value="FKBP-like"/>
    <property type="match status" value="1"/>
</dbReference>
<dbReference type="SUPFAM" id="SSF109998">
    <property type="entry name" value="Triger factor/SurA peptide-binding domain-like"/>
    <property type="match status" value="1"/>
</dbReference>
<dbReference type="SUPFAM" id="SSF102735">
    <property type="entry name" value="Trigger factor ribosome-binding domain"/>
    <property type="match status" value="1"/>
</dbReference>
<dbReference type="PROSITE" id="PS50059">
    <property type="entry name" value="FKBP_PPIASE"/>
    <property type="match status" value="1"/>
</dbReference>
<proteinExistence type="inferred from homology"/>
<evidence type="ECO:0000255" key="1">
    <source>
        <dbReference type="HAMAP-Rule" id="MF_00303"/>
    </source>
</evidence>